<dbReference type="EMBL" id="AE008922">
    <property type="protein sequence ID" value="AAM41503.1"/>
    <property type="molecule type" value="Genomic_DNA"/>
</dbReference>
<dbReference type="RefSeq" id="NP_637579.1">
    <property type="nucleotide sequence ID" value="NC_003902.1"/>
</dbReference>
<dbReference type="SMR" id="Q8P8L7"/>
<dbReference type="STRING" id="190485.XCC2223"/>
<dbReference type="EnsemblBacteria" id="AAM41503">
    <property type="protein sequence ID" value="AAM41503"/>
    <property type="gene ID" value="XCC2223"/>
</dbReference>
<dbReference type="KEGG" id="xcc:XCC2223"/>
<dbReference type="PATRIC" id="fig|190485.4.peg.2374"/>
<dbReference type="eggNOG" id="COG2332">
    <property type="taxonomic scope" value="Bacteria"/>
</dbReference>
<dbReference type="HOGENOM" id="CLU_079503_1_1_6"/>
<dbReference type="OrthoDB" id="9793584at2"/>
<dbReference type="Proteomes" id="UP000001010">
    <property type="component" value="Chromosome"/>
</dbReference>
<dbReference type="GO" id="GO:0005886">
    <property type="term" value="C:plasma membrane"/>
    <property type="evidence" value="ECO:0007669"/>
    <property type="project" value="UniProtKB-SubCell"/>
</dbReference>
<dbReference type="GO" id="GO:0020037">
    <property type="term" value="F:heme binding"/>
    <property type="evidence" value="ECO:0007669"/>
    <property type="project" value="InterPro"/>
</dbReference>
<dbReference type="GO" id="GO:0046872">
    <property type="term" value="F:metal ion binding"/>
    <property type="evidence" value="ECO:0007669"/>
    <property type="project" value="UniProtKB-KW"/>
</dbReference>
<dbReference type="GO" id="GO:0017004">
    <property type="term" value="P:cytochrome complex assembly"/>
    <property type="evidence" value="ECO:0007669"/>
    <property type="project" value="UniProtKB-KW"/>
</dbReference>
<dbReference type="FunFam" id="2.40.50.140:FF:000104">
    <property type="entry name" value="Cytochrome c-type biogenesis protein CcmE"/>
    <property type="match status" value="1"/>
</dbReference>
<dbReference type="Gene3D" id="2.40.50.140">
    <property type="entry name" value="Nucleic acid-binding proteins"/>
    <property type="match status" value="1"/>
</dbReference>
<dbReference type="HAMAP" id="MF_01959">
    <property type="entry name" value="CcmE"/>
    <property type="match status" value="1"/>
</dbReference>
<dbReference type="InterPro" id="IPR004329">
    <property type="entry name" value="CcmE"/>
</dbReference>
<dbReference type="InterPro" id="IPR036127">
    <property type="entry name" value="CcmE-like_sf"/>
</dbReference>
<dbReference type="InterPro" id="IPR012340">
    <property type="entry name" value="NA-bd_OB-fold"/>
</dbReference>
<dbReference type="NCBIfam" id="NF009727">
    <property type="entry name" value="PRK13254.1-1"/>
    <property type="match status" value="1"/>
</dbReference>
<dbReference type="NCBIfam" id="NF009728">
    <property type="entry name" value="PRK13254.1-2"/>
    <property type="match status" value="1"/>
</dbReference>
<dbReference type="NCBIfam" id="NF009729">
    <property type="entry name" value="PRK13254.1-3"/>
    <property type="match status" value="1"/>
</dbReference>
<dbReference type="NCBIfam" id="NF009731">
    <property type="entry name" value="PRK13254.1-5"/>
    <property type="match status" value="1"/>
</dbReference>
<dbReference type="PANTHER" id="PTHR34128">
    <property type="entry name" value="CYTOCHROME C-TYPE BIOGENESIS PROTEIN CCME HOMOLOG, MITOCHONDRIAL"/>
    <property type="match status" value="1"/>
</dbReference>
<dbReference type="PANTHER" id="PTHR34128:SF2">
    <property type="entry name" value="CYTOCHROME C-TYPE BIOGENESIS PROTEIN CCME HOMOLOG, MITOCHONDRIAL"/>
    <property type="match status" value="1"/>
</dbReference>
<dbReference type="Pfam" id="PF03100">
    <property type="entry name" value="CcmE"/>
    <property type="match status" value="1"/>
</dbReference>
<dbReference type="SUPFAM" id="SSF82093">
    <property type="entry name" value="Heme chaperone CcmE"/>
    <property type="match status" value="1"/>
</dbReference>
<gene>
    <name evidence="1" type="primary">ccmE2</name>
    <name evidence="1" type="synonym">cycJ2</name>
    <name type="ordered locus">XCC2223</name>
</gene>
<proteinExistence type="inferred from homology"/>
<evidence type="ECO:0000255" key="1">
    <source>
        <dbReference type="HAMAP-Rule" id="MF_01959"/>
    </source>
</evidence>
<organism>
    <name type="scientific">Xanthomonas campestris pv. campestris (strain ATCC 33913 / DSM 3586 / NCPPB 528 / LMG 568 / P 25)</name>
    <dbReference type="NCBI Taxonomy" id="190485"/>
    <lineage>
        <taxon>Bacteria</taxon>
        <taxon>Pseudomonadati</taxon>
        <taxon>Pseudomonadota</taxon>
        <taxon>Gammaproteobacteria</taxon>
        <taxon>Lysobacterales</taxon>
        <taxon>Lysobacteraceae</taxon>
        <taxon>Xanthomonas</taxon>
    </lineage>
</organism>
<protein>
    <recommendedName>
        <fullName evidence="1">Cytochrome c-type biogenesis protein CcmE 2</fullName>
    </recommendedName>
    <alternativeName>
        <fullName evidence="1">Cytochrome c maturation protein E 2</fullName>
    </alternativeName>
    <alternativeName>
        <fullName evidence="1">Heme chaperone CcmE 2</fullName>
    </alternativeName>
</protein>
<keyword id="KW-0997">Cell inner membrane</keyword>
<keyword id="KW-1003">Cell membrane</keyword>
<keyword id="KW-0201">Cytochrome c-type biogenesis</keyword>
<keyword id="KW-0349">Heme</keyword>
<keyword id="KW-0408">Iron</keyword>
<keyword id="KW-0472">Membrane</keyword>
<keyword id="KW-0479">Metal-binding</keyword>
<keyword id="KW-1185">Reference proteome</keyword>
<keyword id="KW-0735">Signal-anchor</keyword>
<keyword id="KW-0812">Transmembrane</keyword>
<keyword id="KW-1133">Transmembrane helix</keyword>
<comment type="function">
    <text evidence="1">Heme chaperone required for the biogenesis of c-type cytochromes. Transiently binds heme delivered by CcmC and transfers the heme to apo-cytochromes in a process facilitated by CcmF and CcmH.</text>
</comment>
<comment type="subcellular location">
    <subcellularLocation>
        <location evidence="1">Cell inner membrane</location>
        <topology evidence="1">Single-pass type II membrane protein</topology>
        <orientation evidence="1">Periplasmic side</orientation>
    </subcellularLocation>
</comment>
<comment type="similarity">
    <text evidence="1">Belongs to the CcmE/CycJ family.</text>
</comment>
<reference key="1">
    <citation type="journal article" date="2002" name="Nature">
        <title>Comparison of the genomes of two Xanthomonas pathogens with differing host specificities.</title>
        <authorList>
            <person name="da Silva A.C.R."/>
            <person name="Ferro J.A."/>
            <person name="Reinach F.C."/>
            <person name="Farah C.S."/>
            <person name="Furlan L.R."/>
            <person name="Quaggio R.B."/>
            <person name="Monteiro-Vitorello C.B."/>
            <person name="Van Sluys M.A."/>
            <person name="Almeida N.F. Jr."/>
            <person name="Alves L.M.C."/>
            <person name="do Amaral A.M."/>
            <person name="Bertolini M.C."/>
            <person name="Camargo L.E.A."/>
            <person name="Camarotte G."/>
            <person name="Cannavan F."/>
            <person name="Cardozo J."/>
            <person name="Chambergo F."/>
            <person name="Ciapina L.P."/>
            <person name="Cicarelli R.M.B."/>
            <person name="Coutinho L.L."/>
            <person name="Cursino-Santos J.R."/>
            <person name="El-Dorry H."/>
            <person name="Faria J.B."/>
            <person name="Ferreira A.J.S."/>
            <person name="Ferreira R.C.C."/>
            <person name="Ferro M.I.T."/>
            <person name="Formighieri E.F."/>
            <person name="Franco M.C."/>
            <person name="Greggio C.C."/>
            <person name="Gruber A."/>
            <person name="Katsuyama A.M."/>
            <person name="Kishi L.T."/>
            <person name="Leite R.P."/>
            <person name="Lemos E.G.M."/>
            <person name="Lemos M.V.F."/>
            <person name="Locali E.C."/>
            <person name="Machado M.A."/>
            <person name="Madeira A.M.B.N."/>
            <person name="Martinez-Rossi N.M."/>
            <person name="Martins E.C."/>
            <person name="Meidanis J."/>
            <person name="Menck C.F.M."/>
            <person name="Miyaki C.Y."/>
            <person name="Moon D.H."/>
            <person name="Moreira L.M."/>
            <person name="Novo M.T.M."/>
            <person name="Okura V.K."/>
            <person name="Oliveira M.C."/>
            <person name="Oliveira V.R."/>
            <person name="Pereira H.A."/>
            <person name="Rossi A."/>
            <person name="Sena J.A.D."/>
            <person name="Silva C."/>
            <person name="de Souza R.F."/>
            <person name="Spinola L.A.F."/>
            <person name="Takita M.A."/>
            <person name="Tamura R.E."/>
            <person name="Teixeira E.C."/>
            <person name="Tezza R.I.D."/>
            <person name="Trindade dos Santos M."/>
            <person name="Truffi D."/>
            <person name="Tsai S.M."/>
            <person name="White F.F."/>
            <person name="Setubal J.C."/>
            <person name="Kitajima J.P."/>
        </authorList>
    </citation>
    <scope>NUCLEOTIDE SEQUENCE [LARGE SCALE GENOMIC DNA]</scope>
    <source>
        <strain>ATCC 33913 / DSM 3586 / NCPPB 528 / LMG 568 / P 25</strain>
    </source>
</reference>
<feature type="chain" id="PRO_0000238882" description="Cytochrome c-type biogenesis protein CcmE 2">
    <location>
        <begin position="1"/>
        <end position="152"/>
    </location>
</feature>
<feature type="topological domain" description="Cytoplasmic" evidence="1">
    <location>
        <begin position="1"/>
        <end position="8"/>
    </location>
</feature>
<feature type="transmembrane region" description="Helical; Signal-anchor for type II membrane protein" evidence="1">
    <location>
        <begin position="9"/>
        <end position="29"/>
    </location>
</feature>
<feature type="topological domain" description="Periplasmic" evidence="1">
    <location>
        <begin position="30"/>
        <end position="152"/>
    </location>
</feature>
<feature type="binding site" description="covalent" evidence="1">
    <location>
        <position position="123"/>
    </location>
    <ligand>
        <name>heme</name>
        <dbReference type="ChEBI" id="CHEBI:30413"/>
    </ligand>
</feature>
<feature type="binding site" description="axial binding residue" evidence="1">
    <location>
        <position position="127"/>
    </location>
    <ligand>
        <name>heme</name>
        <dbReference type="ChEBI" id="CHEBI:30413"/>
    </ligand>
    <ligandPart>
        <name>Fe</name>
        <dbReference type="ChEBI" id="CHEBI:18248"/>
    </ligandPart>
</feature>
<accession>Q8P8L7</accession>
<sequence>MNPQRRRRLWLVLALVLAGGLATTLVAMALQRNVAYLYTPAEVLRGEAGEHARFRLGGMVEKGSFRREAGSLEAHFRVTDGDAQLPVRYDRILPDLFREGQAVVATGRMQQGVFVAEDVLAKHDETYMPKEVADKMGSAHRKHQVAPAKVTQ</sequence>
<name>CCME2_XANCP</name>